<feature type="chain" id="PRO_0000363484" description="Protein FAR1-RELATED SEQUENCE 6">
    <location>
        <begin position="1"/>
        <end position="703"/>
    </location>
</feature>
<feature type="domain" description="FAR1">
    <location>
        <begin position="99"/>
        <end position="184"/>
    </location>
</feature>
<feature type="domain" description="MULE">
    <location>
        <begin position="297"/>
        <end position="392"/>
    </location>
</feature>
<feature type="zinc finger region" description="SWIM-type" evidence="1">
    <location>
        <begin position="584"/>
        <end position="620"/>
    </location>
</feature>
<feature type="region of interest" description="Disordered" evidence="2">
    <location>
        <begin position="1"/>
        <end position="29"/>
    </location>
</feature>
<organism>
    <name type="scientific">Arabidopsis thaliana</name>
    <name type="common">Mouse-ear cress</name>
    <dbReference type="NCBI Taxonomy" id="3702"/>
    <lineage>
        <taxon>Eukaryota</taxon>
        <taxon>Viridiplantae</taxon>
        <taxon>Streptophyta</taxon>
        <taxon>Embryophyta</taxon>
        <taxon>Tracheophyta</taxon>
        <taxon>Spermatophyta</taxon>
        <taxon>Magnoliopsida</taxon>
        <taxon>eudicotyledons</taxon>
        <taxon>Gunneridae</taxon>
        <taxon>Pentapetalae</taxon>
        <taxon>rosids</taxon>
        <taxon>malvids</taxon>
        <taxon>Brassicales</taxon>
        <taxon>Brassicaceae</taxon>
        <taxon>Camelineae</taxon>
        <taxon>Arabidopsis</taxon>
    </lineage>
</organism>
<accession>Q9SSQ4</accession>
<reference key="1">
    <citation type="journal article" date="2000" name="Nature">
        <title>Sequence and analysis of chromosome 1 of the plant Arabidopsis thaliana.</title>
        <authorList>
            <person name="Theologis A."/>
            <person name="Ecker J.R."/>
            <person name="Palm C.J."/>
            <person name="Federspiel N.A."/>
            <person name="Kaul S."/>
            <person name="White O."/>
            <person name="Alonso J."/>
            <person name="Altafi H."/>
            <person name="Araujo R."/>
            <person name="Bowman C.L."/>
            <person name="Brooks S.Y."/>
            <person name="Buehler E."/>
            <person name="Chan A."/>
            <person name="Chao Q."/>
            <person name="Chen H."/>
            <person name="Cheuk R.F."/>
            <person name="Chin C.W."/>
            <person name="Chung M.K."/>
            <person name="Conn L."/>
            <person name="Conway A.B."/>
            <person name="Conway A.R."/>
            <person name="Creasy T.H."/>
            <person name="Dewar K."/>
            <person name="Dunn P."/>
            <person name="Etgu P."/>
            <person name="Feldblyum T.V."/>
            <person name="Feng J.-D."/>
            <person name="Fong B."/>
            <person name="Fujii C.Y."/>
            <person name="Gill J.E."/>
            <person name="Goldsmith A.D."/>
            <person name="Haas B."/>
            <person name="Hansen N.F."/>
            <person name="Hughes B."/>
            <person name="Huizar L."/>
            <person name="Hunter J.L."/>
            <person name="Jenkins J."/>
            <person name="Johnson-Hopson C."/>
            <person name="Khan S."/>
            <person name="Khaykin E."/>
            <person name="Kim C.J."/>
            <person name="Koo H.L."/>
            <person name="Kremenetskaia I."/>
            <person name="Kurtz D.B."/>
            <person name="Kwan A."/>
            <person name="Lam B."/>
            <person name="Langin-Hooper S."/>
            <person name="Lee A."/>
            <person name="Lee J.M."/>
            <person name="Lenz C.A."/>
            <person name="Li J.H."/>
            <person name="Li Y.-P."/>
            <person name="Lin X."/>
            <person name="Liu S.X."/>
            <person name="Liu Z.A."/>
            <person name="Luros J.S."/>
            <person name="Maiti R."/>
            <person name="Marziali A."/>
            <person name="Militscher J."/>
            <person name="Miranda M."/>
            <person name="Nguyen M."/>
            <person name="Nierman W.C."/>
            <person name="Osborne B.I."/>
            <person name="Pai G."/>
            <person name="Peterson J."/>
            <person name="Pham P.K."/>
            <person name="Rizzo M."/>
            <person name="Rooney T."/>
            <person name="Rowley D."/>
            <person name="Sakano H."/>
            <person name="Salzberg S.L."/>
            <person name="Schwartz J.R."/>
            <person name="Shinn P."/>
            <person name="Southwick A.M."/>
            <person name="Sun H."/>
            <person name="Tallon L.J."/>
            <person name="Tambunga G."/>
            <person name="Toriumi M.J."/>
            <person name="Town C.D."/>
            <person name="Utterback T."/>
            <person name="Van Aken S."/>
            <person name="Vaysberg M."/>
            <person name="Vysotskaia V.S."/>
            <person name="Walker M."/>
            <person name="Wu D."/>
            <person name="Yu G."/>
            <person name="Fraser C.M."/>
            <person name="Venter J.C."/>
            <person name="Davis R.W."/>
        </authorList>
    </citation>
    <scope>NUCLEOTIDE SEQUENCE [LARGE SCALE GENOMIC DNA]</scope>
    <source>
        <strain>cv. Columbia</strain>
    </source>
</reference>
<reference key="2">
    <citation type="journal article" date="2017" name="Plant J.">
        <title>Araport11: a complete reannotation of the Arabidopsis thaliana reference genome.</title>
        <authorList>
            <person name="Cheng C.Y."/>
            <person name="Krishnakumar V."/>
            <person name="Chan A.P."/>
            <person name="Thibaud-Nissen F."/>
            <person name="Schobel S."/>
            <person name="Town C.D."/>
        </authorList>
    </citation>
    <scope>GENOME REANNOTATION</scope>
    <source>
        <strain>cv. Columbia</strain>
    </source>
</reference>
<reference key="3">
    <citation type="journal article" date="2003" name="Science">
        <title>Empirical analysis of transcriptional activity in the Arabidopsis genome.</title>
        <authorList>
            <person name="Yamada K."/>
            <person name="Lim J."/>
            <person name="Dale J.M."/>
            <person name="Chen H."/>
            <person name="Shinn P."/>
            <person name="Palm C.J."/>
            <person name="Southwick A.M."/>
            <person name="Wu H.C."/>
            <person name="Kim C.J."/>
            <person name="Nguyen M."/>
            <person name="Pham P.K."/>
            <person name="Cheuk R.F."/>
            <person name="Karlin-Newmann G."/>
            <person name="Liu S.X."/>
            <person name="Lam B."/>
            <person name="Sakano H."/>
            <person name="Wu T."/>
            <person name="Yu G."/>
            <person name="Miranda M."/>
            <person name="Quach H.L."/>
            <person name="Tripp M."/>
            <person name="Chang C.H."/>
            <person name="Lee J.M."/>
            <person name="Toriumi M.J."/>
            <person name="Chan M.M."/>
            <person name="Tang C.C."/>
            <person name="Onodera C.S."/>
            <person name="Deng J.M."/>
            <person name="Akiyama K."/>
            <person name="Ansari Y."/>
            <person name="Arakawa T."/>
            <person name="Banh J."/>
            <person name="Banno F."/>
            <person name="Bowser L."/>
            <person name="Brooks S.Y."/>
            <person name="Carninci P."/>
            <person name="Chao Q."/>
            <person name="Choy N."/>
            <person name="Enju A."/>
            <person name="Goldsmith A.D."/>
            <person name="Gurjal M."/>
            <person name="Hansen N.F."/>
            <person name="Hayashizaki Y."/>
            <person name="Johnson-Hopson C."/>
            <person name="Hsuan V.W."/>
            <person name="Iida K."/>
            <person name="Karnes M."/>
            <person name="Khan S."/>
            <person name="Koesema E."/>
            <person name="Ishida J."/>
            <person name="Jiang P.X."/>
            <person name="Jones T."/>
            <person name="Kawai J."/>
            <person name="Kamiya A."/>
            <person name="Meyers C."/>
            <person name="Nakajima M."/>
            <person name="Narusaka M."/>
            <person name="Seki M."/>
            <person name="Sakurai T."/>
            <person name="Satou M."/>
            <person name="Tamse R."/>
            <person name="Vaysberg M."/>
            <person name="Wallender E.K."/>
            <person name="Wong C."/>
            <person name="Yamamura Y."/>
            <person name="Yuan S."/>
            <person name="Shinozaki K."/>
            <person name="Davis R.W."/>
            <person name="Theologis A."/>
            <person name="Ecker J.R."/>
        </authorList>
    </citation>
    <scope>NUCLEOTIDE SEQUENCE [LARGE SCALE MRNA]</scope>
    <source>
        <strain>cv. Columbia</strain>
    </source>
</reference>
<reference key="4">
    <citation type="journal article" date="2004" name="Plant Physiol.">
        <title>Arabidopsis FHY3/FAR1 gene family and distinct roles of its members in light control of Arabidopsis development.</title>
        <authorList>
            <person name="Lin R."/>
            <person name="Wang H."/>
        </authorList>
    </citation>
    <scope>FUNCTION</scope>
    <scope>TISSUE SPECIFICITY</scope>
    <scope>INDUCTION</scope>
    <scope>SUBCELLULAR LOCATION</scope>
    <scope>GENE FAMILY</scope>
    <scope>NOMENCLATURE</scope>
</reference>
<sequence length="703" mass="81604">MERSESVDEDVQASAYLENDEVRERDDPMSDTLRIGEEALVCSSEHEIDVGFCQNEERKSEEETMGGFDEQSGLLVDERKEFDAPAVGMEFESYDDAYNYYNCYASEVGFRVRVKNSWFKRRSKEKYGAVLCCSSQGFKRINDVNRVRKETRTGCPAMIRMRQVDSKRWRVVEVTLDHNHLLGCKLYKSVKRKRKCVSSPVSDAKTIKLYRACVVDNGSNVNPNSTLNKKFQNSTGSPDLLNLKRGDSAAIYNYFCRMQLTNPNFFYLMDVNDEGQLRNVFWADAFSKVSCSYFGDVIFIDSSYISGKFEIPLVTFTGVNHHGKTTLLSCGFLAGETMESYHWLLKVWLSVMKRSPQTIVTDRCKPLEAAISQVFPRSHQRFSLTHIMRKIPEKLGGLHNYDAVRKAFTKAVYETLKVVEFEAAWGFMVHNFGVIENEWLRSLYEERAKWAPVYLKDTFFAGIAAAHPGETLKPFFERYVHKQTPLKEFLDKYELALQKKHREETLSDIESQTLNTAELKTKCSFETQLSRIYTRDMFKKFQIEVEEMYSCFSTTQVHVDGPFVIFLVKERVRGESSRREIRDFEVLYNRSVGEVRCICSCFNFYGYLCRHALCVLNFNGVEEIPLRYILPRWRKDYKRLHFADNGLTGFVDGTDRVQWFDQLYKNSLQVVEEGAVSLDHYKVAMQVLQESLDKVHSVEEKQD</sequence>
<name>FRS6_ARATH</name>
<dbReference type="EMBL" id="AC008016">
    <property type="protein sequence ID" value="AAD55625.1"/>
    <property type="molecule type" value="Genomic_DNA"/>
</dbReference>
<dbReference type="EMBL" id="CP002684">
    <property type="protein sequence ID" value="AEE32818.1"/>
    <property type="molecule type" value="Genomic_DNA"/>
</dbReference>
<dbReference type="EMBL" id="AY080775">
    <property type="protein sequence ID" value="AAL87259.1"/>
    <property type="molecule type" value="mRNA"/>
</dbReference>
<dbReference type="EMBL" id="AY133776">
    <property type="protein sequence ID" value="AAM91710.1"/>
    <property type="molecule type" value="mRNA"/>
</dbReference>
<dbReference type="PIR" id="G96565">
    <property type="entry name" value="G96565"/>
</dbReference>
<dbReference type="RefSeq" id="NP_175661.1">
    <property type="nucleotide sequence ID" value="NM_104130.4"/>
</dbReference>
<dbReference type="FunCoup" id="Q9SSQ4">
    <property type="interactions" value="295"/>
</dbReference>
<dbReference type="STRING" id="3702.Q9SSQ4"/>
<dbReference type="PaxDb" id="3702-AT1G52520.1"/>
<dbReference type="ProteomicsDB" id="228955"/>
<dbReference type="EnsemblPlants" id="AT1G52520.1">
    <property type="protein sequence ID" value="AT1G52520.1"/>
    <property type="gene ID" value="AT1G52520"/>
</dbReference>
<dbReference type="GeneID" id="841683"/>
<dbReference type="Gramene" id="AT1G52520.1">
    <property type="protein sequence ID" value="AT1G52520.1"/>
    <property type="gene ID" value="AT1G52520"/>
</dbReference>
<dbReference type="KEGG" id="ath:AT1G52520"/>
<dbReference type="Araport" id="AT1G52520"/>
<dbReference type="TAIR" id="AT1G52520">
    <property type="gene designation" value="FRS6"/>
</dbReference>
<dbReference type="eggNOG" id="ENOG502QS51">
    <property type="taxonomic scope" value="Eukaryota"/>
</dbReference>
<dbReference type="HOGENOM" id="CLU_008459_7_0_1"/>
<dbReference type="InParanoid" id="Q9SSQ4"/>
<dbReference type="OMA" id="TDRVQWF"/>
<dbReference type="PhylomeDB" id="Q9SSQ4"/>
<dbReference type="PRO" id="PR:Q9SSQ4"/>
<dbReference type="Proteomes" id="UP000006548">
    <property type="component" value="Chromosome 1"/>
</dbReference>
<dbReference type="ExpressionAtlas" id="Q9SSQ4">
    <property type="expression patterns" value="baseline and differential"/>
</dbReference>
<dbReference type="GO" id="GO:0005634">
    <property type="term" value="C:nucleus"/>
    <property type="evidence" value="ECO:0007669"/>
    <property type="project" value="UniProtKB-SubCell"/>
</dbReference>
<dbReference type="GO" id="GO:0008270">
    <property type="term" value="F:zinc ion binding"/>
    <property type="evidence" value="ECO:0007669"/>
    <property type="project" value="UniProtKB-KW"/>
</dbReference>
<dbReference type="GO" id="GO:0006355">
    <property type="term" value="P:regulation of DNA-templated transcription"/>
    <property type="evidence" value="ECO:0007669"/>
    <property type="project" value="InterPro"/>
</dbReference>
<dbReference type="InterPro" id="IPR004330">
    <property type="entry name" value="FAR1_DNA_bnd_dom"/>
</dbReference>
<dbReference type="InterPro" id="IPR031052">
    <property type="entry name" value="FHY3/FAR1"/>
</dbReference>
<dbReference type="InterPro" id="IPR018289">
    <property type="entry name" value="MULE_transposase_dom"/>
</dbReference>
<dbReference type="InterPro" id="IPR006564">
    <property type="entry name" value="Znf_PMZ"/>
</dbReference>
<dbReference type="InterPro" id="IPR007527">
    <property type="entry name" value="Znf_SWIM"/>
</dbReference>
<dbReference type="PANTHER" id="PTHR31669">
    <property type="entry name" value="PROTEIN FAR1-RELATED SEQUENCE 10-RELATED"/>
    <property type="match status" value="1"/>
</dbReference>
<dbReference type="PANTHER" id="PTHR31669:SF10">
    <property type="entry name" value="PROTEIN FAR1-RELATED SEQUENCE 6"/>
    <property type="match status" value="1"/>
</dbReference>
<dbReference type="Pfam" id="PF03101">
    <property type="entry name" value="FAR1"/>
    <property type="match status" value="1"/>
</dbReference>
<dbReference type="Pfam" id="PF10551">
    <property type="entry name" value="MULE"/>
    <property type="match status" value="1"/>
</dbReference>
<dbReference type="Pfam" id="PF04434">
    <property type="entry name" value="SWIM"/>
    <property type="match status" value="1"/>
</dbReference>
<dbReference type="SMART" id="SM00575">
    <property type="entry name" value="ZnF_PMZ"/>
    <property type="match status" value="1"/>
</dbReference>
<dbReference type="PROSITE" id="PS50966">
    <property type="entry name" value="ZF_SWIM"/>
    <property type="match status" value="1"/>
</dbReference>
<protein>
    <recommendedName>
        <fullName>Protein FAR1-RELATED SEQUENCE 6</fullName>
    </recommendedName>
</protein>
<evidence type="ECO:0000255" key="1">
    <source>
        <dbReference type="PROSITE-ProRule" id="PRU00325"/>
    </source>
</evidence>
<evidence type="ECO:0000256" key="2">
    <source>
        <dbReference type="SAM" id="MobiDB-lite"/>
    </source>
</evidence>
<evidence type="ECO:0000269" key="3">
    <source>
    </source>
</evidence>
<evidence type="ECO:0000305" key="4"/>
<gene>
    <name type="primary">FRS6</name>
    <name type="ordered locus">At1g52520</name>
    <name type="ORF">F6D8.26</name>
</gene>
<proteinExistence type="evidence at transcript level"/>
<comment type="function">
    <text evidence="3">Putative transcription activator involved in regulating light control of development. May have a role in controlling flowering time.</text>
</comment>
<comment type="subcellular location">
    <subcellularLocation>
        <location evidence="3">Nucleus</location>
    </subcellularLocation>
    <text>The nuclear localization is independent of the light treatment.</text>
</comment>
<comment type="tissue specificity">
    <text evidence="3">Expressed in hypocotyls, rosette and cauline leaves, inflorescences stems, flowers and siliques.</text>
</comment>
<comment type="induction">
    <text evidence="3">Up-regulated in hypocotyls by far-red light treatment.</text>
</comment>
<comment type="similarity">
    <text evidence="4">Belongs to the FHY3/FAR1 family.</text>
</comment>
<keyword id="KW-0479">Metal-binding</keyword>
<keyword id="KW-0539">Nucleus</keyword>
<keyword id="KW-1185">Reference proteome</keyword>
<keyword id="KW-0862">Zinc</keyword>
<keyword id="KW-0863">Zinc-finger</keyword>